<name>CXXC4_XENLA</name>
<protein>
    <recommendedName>
        <fullName>CXXC-type zinc finger protein 4</fullName>
    </recommendedName>
    <alternativeName>
        <fullName>Inhibition of the Dvl and axin complex protein</fullName>
        <shortName>xIdax</shortName>
    </alternativeName>
</protein>
<organism>
    <name type="scientific">Xenopus laevis</name>
    <name type="common">African clawed frog</name>
    <dbReference type="NCBI Taxonomy" id="8355"/>
    <lineage>
        <taxon>Eukaryota</taxon>
        <taxon>Metazoa</taxon>
        <taxon>Chordata</taxon>
        <taxon>Craniata</taxon>
        <taxon>Vertebrata</taxon>
        <taxon>Euteleostomi</taxon>
        <taxon>Amphibia</taxon>
        <taxon>Batrachia</taxon>
        <taxon>Anura</taxon>
        <taxon>Pipoidea</taxon>
        <taxon>Pipidae</taxon>
        <taxon>Xenopodinae</taxon>
        <taxon>Xenopus</taxon>
        <taxon>Xenopus</taxon>
    </lineage>
</organism>
<feature type="chain" id="PRO_0000317545" description="CXXC-type zinc finger protein 4">
    <location>
        <begin position="1"/>
        <end position="217"/>
    </location>
</feature>
<feature type="zinc finger region" description="CXXC-type" evidence="3">
    <location>
        <begin position="122"/>
        <end position="163"/>
    </location>
</feature>
<feature type="region of interest" description="Disordered" evidence="4">
    <location>
        <begin position="1"/>
        <end position="20"/>
    </location>
</feature>
<feature type="binding site" evidence="3">
    <location>
        <position position="129"/>
    </location>
    <ligand>
        <name>Zn(2+)</name>
        <dbReference type="ChEBI" id="CHEBI:29105"/>
        <label>1</label>
    </ligand>
</feature>
<feature type="binding site" evidence="3">
    <location>
        <position position="132"/>
    </location>
    <ligand>
        <name>Zn(2+)</name>
        <dbReference type="ChEBI" id="CHEBI:29105"/>
        <label>1</label>
    </ligand>
</feature>
<feature type="binding site" evidence="3">
    <location>
        <position position="135"/>
    </location>
    <ligand>
        <name>Zn(2+)</name>
        <dbReference type="ChEBI" id="CHEBI:29105"/>
        <label>1</label>
    </ligand>
</feature>
<feature type="binding site" evidence="3">
    <location>
        <position position="141"/>
    </location>
    <ligand>
        <name>Zn(2+)</name>
        <dbReference type="ChEBI" id="CHEBI:29105"/>
        <label>2</label>
    </ligand>
</feature>
<feature type="binding site" evidence="3">
    <location>
        <position position="144"/>
    </location>
    <ligand>
        <name>Zn(2+)</name>
        <dbReference type="ChEBI" id="CHEBI:29105"/>
        <label>2</label>
    </ligand>
</feature>
<feature type="binding site" evidence="3">
    <location>
        <position position="147"/>
    </location>
    <ligand>
        <name>Zn(2+)</name>
        <dbReference type="ChEBI" id="CHEBI:29105"/>
        <label>2</label>
    </ligand>
</feature>
<feature type="binding site" evidence="3">
    <location>
        <position position="157"/>
    </location>
    <ligand>
        <name>Zn(2+)</name>
        <dbReference type="ChEBI" id="CHEBI:29105"/>
        <label>2</label>
    </ligand>
</feature>
<feature type="binding site" evidence="3">
    <location>
        <position position="162"/>
    </location>
    <ligand>
        <name>Zn(2+)</name>
        <dbReference type="ChEBI" id="CHEBI:29105"/>
        <label>1</label>
    </ligand>
</feature>
<sequence>MHRNDSQRLGKPGGAPESLQMANNNFLSTLSPEHCRPLAGECMNKLKCGAAEAEIMNLPERVGTFSAIPALGGISLPPGVIVMTALHSPAAASAAVTDSAFQIANLADCPQNNSSGAGGNPAKKKRKRCGVCVPCKRLINCGVCSSCRNRKTGHQICKFRKCEELKKKPGTSLEVRGDDSFFPCLASSLIPPFSPPFQCFLSPFKMHHSFSESPSRL</sequence>
<evidence type="ECO:0000250" key="1">
    <source>
        <dbReference type="UniProtKB" id="Q9EQC9"/>
    </source>
</evidence>
<evidence type="ECO:0000250" key="2">
    <source>
        <dbReference type="UniProtKB" id="Q9H2H0"/>
    </source>
</evidence>
<evidence type="ECO:0000255" key="3">
    <source>
        <dbReference type="PROSITE-ProRule" id="PRU00509"/>
    </source>
</evidence>
<evidence type="ECO:0000256" key="4">
    <source>
        <dbReference type="SAM" id="MobiDB-lite"/>
    </source>
</evidence>
<evidence type="ECO:0000269" key="5">
    <source>
    </source>
</evidence>
<evidence type="ECO:0000269" key="6">
    <source>
    </source>
</evidence>
<proteinExistence type="evidence at transcript level"/>
<dbReference type="EMBL" id="AB085700">
    <property type="protein sequence ID" value="BAC58028.1"/>
    <property type="molecule type" value="Genomic_DNA"/>
</dbReference>
<dbReference type="SMR" id="Q800L6"/>
<dbReference type="Proteomes" id="UP000186698">
    <property type="component" value="Unplaced"/>
</dbReference>
<dbReference type="GO" id="GO:0005737">
    <property type="term" value="C:cytoplasm"/>
    <property type="evidence" value="ECO:0007669"/>
    <property type="project" value="UniProtKB-SubCell"/>
</dbReference>
<dbReference type="GO" id="GO:0005634">
    <property type="term" value="C:nucleus"/>
    <property type="evidence" value="ECO:0000318"/>
    <property type="project" value="GO_Central"/>
</dbReference>
<dbReference type="GO" id="GO:0008327">
    <property type="term" value="F:methyl-CpG binding"/>
    <property type="evidence" value="ECO:0000250"/>
    <property type="project" value="UniProtKB"/>
</dbReference>
<dbReference type="GO" id="GO:0008270">
    <property type="term" value="F:zinc ion binding"/>
    <property type="evidence" value="ECO:0000250"/>
    <property type="project" value="UniProtKB"/>
</dbReference>
<dbReference type="GO" id="GO:0016055">
    <property type="term" value="P:Wnt signaling pathway"/>
    <property type="evidence" value="ECO:0007669"/>
    <property type="project" value="UniProtKB-KW"/>
</dbReference>
<dbReference type="InterPro" id="IPR040388">
    <property type="entry name" value="CXXC4/CXXC5"/>
</dbReference>
<dbReference type="InterPro" id="IPR002857">
    <property type="entry name" value="Znf_CXXC"/>
</dbReference>
<dbReference type="PANTHER" id="PTHR13419:SF1">
    <property type="entry name" value="CXXC-TYPE ZINC FINGER PROTEIN 4"/>
    <property type="match status" value="1"/>
</dbReference>
<dbReference type="PANTHER" id="PTHR13419">
    <property type="entry name" value="ZINC FINGER-CONTAINING"/>
    <property type="match status" value="1"/>
</dbReference>
<dbReference type="Pfam" id="PF02008">
    <property type="entry name" value="zf-CXXC"/>
    <property type="match status" value="1"/>
</dbReference>
<dbReference type="PROSITE" id="PS51058">
    <property type="entry name" value="ZF_CXXC"/>
    <property type="match status" value="1"/>
</dbReference>
<keyword id="KW-0963">Cytoplasm</keyword>
<keyword id="KW-0238">DNA-binding</keyword>
<keyword id="KW-0479">Metal-binding</keyword>
<keyword id="KW-1185">Reference proteome</keyword>
<keyword id="KW-0879">Wnt signaling pathway</keyword>
<keyword id="KW-0862">Zinc</keyword>
<keyword id="KW-0863">Zinc-finger</keyword>
<accession>Q800L6</accession>
<comment type="function">
    <text evidence="2 5 6">Acts as a negative regulator of the Wnt signaling pathway required for anterior neural structure formation (PubMed:11113207, PubMed:15108311). Ectopic expression induces ventralization (PubMed:11113207, PubMed:15108311). Binds preferentially to DNA containing cytidine-phosphate-guanosine (CpG) dinucleotides over CpH (H=A, T, and C), hemimethylated-CpG and hemimethylated-hydroxymethyl-CpG (By similarity).</text>
</comment>
<comment type="subcellular location">
    <subcellularLocation>
        <location evidence="1">Cytoplasm</location>
    </subcellularLocation>
</comment>
<comment type="developmental stage">
    <text evidence="6">Expressed in neural tissues at the neurula stage, and in the restricted region of the tadpole brain.</text>
</comment>
<comment type="domain">
    <text evidence="2">The CXXC zinc finger mediates binding to CpG-DNA.</text>
</comment>
<reference key="1">
    <citation type="journal article" date="2004" name="Dev. Dyn.">
        <title>XIdax, an inhibitor of the canonical Wnt pathway, is required for anterior neural structure formation in Xenopus.</title>
        <authorList>
            <person name="Michiue T."/>
            <person name="Fukui A."/>
            <person name="Yukita A."/>
            <person name="Sakurai K."/>
            <person name="Danno H."/>
            <person name="Kikuchi A."/>
            <person name="Asashima M."/>
        </authorList>
    </citation>
    <scope>NUCLEOTIDE SEQUENCE [GENOMIC DNA]</scope>
    <scope>FUNCTION</scope>
    <scope>DEVELOPMENTAL STAGE</scope>
</reference>
<reference key="2">
    <citation type="journal article" date="2001" name="Mol. Cell. Biol.">
        <title>Inhibition of the Wnt signaling pathway by Idax, a novel Dvl-binding protein.</title>
        <authorList>
            <person name="Hino S."/>
            <person name="Kishida S."/>
            <person name="Michiue T."/>
            <person name="Fukui A."/>
            <person name="Sakamoto I."/>
            <person name="Takada S."/>
            <person name="Asashima M."/>
            <person name="Kikuchi A."/>
        </authorList>
    </citation>
    <scope>FUNCTION</scope>
</reference>
<gene>
    <name type="primary">cxxc4</name>
    <name type="synonym">idax</name>
</gene>